<reference key="1">
    <citation type="submission" date="2006-10" db="EMBL/GenBank/DDBJ databases">
        <title>Complete sequence of chromosome of Pelobacter propionicus DSM 2379.</title>
        <authorList>
            <consortium name="US DOE Joint Genome Institute"/>
            <person name="Copeland A."/>
            <person name="Lucas S."/>
            <person name="Lapidus A."/>
            <person name="Barry K."/>
            <person name="Detter J.C."/>
            <person name="Glavina del Rio T."/>
            <person name="Hammon N."/>
            <person name="Israni S."/>
            <person name="Dalin E."/>
            <person name="Tice H."/>
            <person name="Pitluck S."/>
            <person name="Saunders E."/>
            <person name="Brettin T."/>
            <person name="Bruce D."/>
            <person name="Han C."/>
            <person name="Tapia R."/>
            <person name="Schmutz J."/>
            <person name="Larimer F."/>
            <person name="Land M."/>
            <person name="Hauser L."/>
            <person name="Kyrpides N."/>
            <person name="Kim E."/>
            <person name="Lovley D."/>
            <person name="Richardson P."/>
        </authorList>
    </citation>
    <scope>NUCLEOTIDE SEQUENCE [LARGE SCALE GENOMIC DNA]</scope>
    <source>
        <strain>DSM 2379 / NBRC 103807 / OttBd1</strain>
    </source>
</reference>
<name>NUOB_PELPD</name>
<feature type="chain" id="PRO_0000358443" description="NADH-quinone oxidoreductase subunit B">
    <location>
        <begin position="1"/>
        <end position="163"/>
    </location>
</feature>
<feature type="binding site" evidence="2">
    <location>
        <position position="32"/>
    </location>
    <ligand>
        <name>[4Fe-4S] cluster</name>
        <dbReference type="ChEBI" id="CHEBI:49883"/>
    </ligand>
</feature>
<feature type="binding site" evidence="2">
    <location>
        <position position="33"/>
    </location>
    <ligand>
        <name>[4Fe-4S] cluster</name>
        <dbReference type="ChEBI" id="CHEBI:49883"/>
    </ligand>
</feature>
<feature type="binding site" evidence="2">
    <location>
        <position position="98"/>
    </location>
    <ligand>
        <name>[4Fe-4S] cluster</name>
        <dbReference type="ChEBI" id="CHEBI:49883"/>
    </ligand>
</feature>
<feature type="binding site" evidence="2">
    <location>
        <position position="127"/>
    </location>
    <ligand>
        <name>[4Fe-4S] cluster</name>
        <dbReference type="ChEBI" id="CHEBI:49883"/>
    </ligand>
</feature>
<organism>
    <name type="scientific">Pelobacter propionicus (strain DSM 2379 / NBRC 103807 / OttBd1)</name>
    <dbReference type="NCBI Taxonomy" id="338966"/>
    <lineage>
        <taxon>Bacteria</taxon>
        <taxon>Pseudomonadati</taxon>
        <taxon>Thermodesulfobacteriota</taxon>
        <taxon>Desulfuromonadia</taxon>
        <taxon>Desulfuromonadales</taxon>
        <taxon>Desulfuromonadaceae</taxon>
        <taxon>Pelobacter</taxon>
    </lineage>
</organism>
<gene>
    <name evidence="2" type="primary">nuoB1</name>
    <name type="ordered locus">Ppro_0629</name>
</gene>
<gene>
    <name evidence="2" type="primary">nuoB2</name>
    <name type="ordered locus">Ppro_1624</name>
</gene>
<gene>
    <name evidence="2" type="primary">nuoB3</name>
    <name type="ordered locus">Ppro_3192</name>
</gene>
<dbReference type="EC" id="7.1.1.-" evidence="2"/>
<dbReference type="EMBL" id="CP000482">
    <property type="protein sequence ID" value="ABK98260.1"/>
    <property type="molecule type" value="Genomic_DNA"/>
</dbReference>
<dbReference type="EMBL" id="CP000482">
    <property type="protein sequence ID" value="ABK99239.1"/>
    <property type="molecule type" value="Genomic_DNA"/>
</dbReference>
<dbReference type="EMBL" id="CP000482">
    <property type="protein sequence ID" value="ABL00786.1"/>
    <property type="molecule type" value="Genomic_DNA"/>
</dbReference>
<dbReference type="RefSeq" id="WP_011734573.1">
    <property type="nucleotide sequence ID" value="NC_008609.1"/>
</dbReference>
<dbReference type="SMR" id="A1ALP0"/>
<dbReference type="STRING" id="338966.Ppro_0629"/>
<dbReference type="KEGG" id="ppd:Ppro_0629"/>
<dbReference type="KEGG" id="ppd:Ppro_1624"/>
<dbReference type="KEGG" id="ppd:Ppro_3192"/>
<dbReference type="eggNOG" id="COG0377">
    <property type="taxonomic scope" value="Bacteria"/>
</dbReference>
<dbReference type="HOGENOM" id="CLU_055737_7_3_7"/>
<dbReference type="OrthoDB" id="9786737at2"/>
<dbReference type="Proteomes" id="UP000006732">
    <property type="component" value="Chromosome"/>
</dbReference>
<dbReference type="GO" id="GO:0005886">
    <property type="term" value="C:plasma membrane"/>
    <property type="evidence" value="ECO:0007669"/>
    <property type="project" value="UniProtKB-SubCell"/>
</dbReference>
<dbReference type="GO" id="GO:0045271">
    <property type="term" value="C:respiratory chain complex I"/>
    <property type="evidence" value="ECO:0007669"/>
    <property type="project" value="TreeGrafter"/>
</dbReference>
<dbReference type="GO" id="GO:0051539">
    <property type="term" value="F:4 iron, 4 sulfur cluster binding"/>
    <property type="evidence" value="ECO:0007669"/>
    <property type="project" value="UniProtKB-KW"/>
</dbReference>
<dbReference type="GO" id="GO:0005506">
    <property type="term" value="F:iron ion binding"/>
    <property type="evidence" value="ECO:0007669"/>
    <property type="project" value="UniProtKB-UniRule"/>
</dbReference>
<dbReference type="GO" id="GO:0008137">
    <property type="term" value="F:NADH dehydrogenase (ubiquinone) activity"/>
    <property type="evidence" value="ECO:0007669"/>
    <property type="project" value="InterPro"/>
</dbReference>
<dbReference type="GO" id="GO:0050136">
    <property type="term" value="F:NADH:ubiquinone reductase (non-electrogenic) activity"/>
    <property type="evidence" value="ECO:0007669"/>
    <property type="project" value="UniProtKB-UniRule"/>
</dbReference>
<dbReference type="GO" id="GO:0048038">
    <property type="term" value="F:quinone binding"/>
    <property type="evidence" value="ECO:0007669"/>
    <property type="project" value="UniProtKB-KW"/>
</dbReference>
<dbReference type="GO" id="GO:0009060">
    <property type="term" value="P:aerobic respiration"/>
    <property type="evidence" value="ECO:0007669"/>
    <property type="project" value="TreeGrafter"/>
</dbReference>
<dbReference type="GO" id="GO:0015990">
    <property type="term" value="P:electron transport coupled proton transport"/>
    <property type="evidence" value="ECO:0007669"/>
    <property type="project" value="TreeGrafter"/>
</dbReference>
<dbReference type="FunFam" id="3.40.50.12280:FF:000002">
    <property type="entry name" value="NADH-quinone oxidoreductase subunit B"/>
    <property type="match status" value="1"/>
</dbReference>
<dbReference type="Gene3D" id="3.40.50.12280">
    <property type="match status" value="1"/>
</dbReference>
<dbReference type="HAMAP" id="MF_01356">
    <property type="entry name" value="NDH1_NuoB"/>
    <property type="match status" value="1"/>
</dbReference>
<dbReference type="InterPro" id="IPR006137">
    <property type="entry name" value="NADH_UbQ_OxRdtase-like_20kDa"/>
</dbReference>
<dbReference type="InterPro" id="IPR006138">
    <property type="entry name" value="NADH_UQ_OxRdtase_20Kd_su"/>
</dbReference>
<dbReference type="NCBIfam" id="TIGR01957">
    <property type="entry name" value="nuoB_fam"/>
    <property type="match status" value="1"/>
</dbReference>
<dbReference type="NCBIfam" id="NF005012">
    <property type="entry name" value="PRK06411.1"/>
    <property type="match status" value="1"/>
</dbReference>
<dbReference type="PANTHER" id="PTHR11995">
    <property type="entry name" value="NADH DEHYDROGENASE"/>
    <property type="match status" value="1"/>
</dbReference>
<dbReference type="PANTHER" id="PTHR11995:SF14">
    <property type="entry name" value="NADH DEHYDROGENASE [UBIQUINONE] IRON-SULFUR PROTEIN 7, MITOCHONDRIAL"/>
    <property type="match status" value="1"/>
</dbReference>
<dbReference type="Pfam" id="PF01058">
    <property type="entry name" value="Oxidored_q6"/>
    <property type="match status" value="1"/>
</dbReference>
<dbReference type="SUPFAM" id="SSF56770">
    <property type="entry name" value="HydA/Nqo6-like"/>
    <property type="match status" value="1"/>
</dbReference>
<dbReference type="PROSITE" id="PS01150">
    <property type="entry name" value="COMPLEX1_20K"/>
    <property type="match status" value="1"/>
</dbReference>
<comment type="function">
    <text evidence="1">NDH-1 shuttles electrons from NADH, via FMN and iron-sulfur (Fe-S) centers, to quinones in the respiratory chain. Couples the redox reaction to proton translocation (for every two electrons transferred, four hydrogen ions are translocated across the cytoplasmic membrane), and thus conserves the redox energy in a proton gradient (By similarity).</text>
</comment>
<comment type="catalytic activity">
    <reaction evidence="2">
        <text>a quinone + NADH + 5 H(+)(in) = a quinol + NAD(+) + 4 H(+)(out)</text>
        <dbReference type="Rhea" id="RHEA:57888"/>
        <dbReference type="ChEBI" id="CHEBI:15378"/>
        <dbReference type="ChEBI" id="CHEBI:24646"/>
        <dbReference type="ChEBI" id="CHEBI:57540"/>
        <dbReference type="ChEBI" id="CHEBI:57945"/>
        <dbReference type="ChEBI" id="CHEBI:132124"/>
    </reaction>
</comment>
<comment type="cofactor">
    <cofactor evidence="2">
        <name>[4Fe-4S] cluster</name>
        <dbReference type="ChEBI" id="CHEBI:49883"/>
    </cofactor>
    <text evidence="2">Binds 1 [4Fe-4S] cluster.</text>
</comment>
<comment type="subunit">
    <text evidence="2">NDH-1 is composed of 14 different subunits. Subunits NuoB, C, D, E, F, and G constitute the peripheral sector of the complex.</text>
</comment>
<comment type="subcellular location">
    <subcellularLocation>
        <location evidence="2">Cell inner membrane</location>
        <topology evidence="2">Peripheral membrane protein</topology>
        <orientation evidence="2">Cytoplasmic side</orientation>
    </subcellularLocation>
</comment>
<comment type="similarity">
    <text evidence="2">Belongs to the complex I 20 kDa subunit family.</text>
</comment>
<proteinExistence type="inferred from homology"/>
<evidence type="ECO:0000250" key="1"/>
<evidence type="ECO:0000255" key="2">
    <source>
        <dbReference type="HAMAP-Rule" id="MF_01356"/>
    </source>
</evidence>
<sequence>MAMMEYLTTRKDELIGWVRKFSIFPYPFVTACCGMEFMAVASTLYDTDRFGAALPRFTPRQSDLLMVVGTITHKEAPVIKRVYDQMCDPKWVMAFGACATSGGVYRNYTVLQGVDRIIPVDIYIPGCPPRPEMVIDAIMKLQDKIAGERHPIFPYEKQNPVPV</sequence>
<accession>A1ALP0</accession>
<protein>
    <recommendedName>
        <fullName evidence="2">NADH-quinone oxidoreductase subunit B</fullName>
        <ecNumber evidence="2">7.1.1.-</ecNumber>
    </recommendedName>
    <alternativeName>
        <fullName evidence="2">NADH dehydrogenase I subunit B</fullName>
    </alternativeName>
    <alternativeName>
        <fullName evidence="2">NDH-1 subunit B</fullName>
    </alternativeName>
</protein>
<keyword id="KW-0004">4Fe-4S</keyword>
<keyword id="KW-0997">Cell inner membrane</keyword>
<keyword id="KW-1003">Cell membrane</keyword>
<keyword id="KW-0408">Iron</keyword>
<keyword id="KW-0411">Iron-sulfur</keyword>
<keyword id="KW-0472">Membrane</keyword>
<keyword id="KW-0479">Metal-binding</keyword>
<keyword id="KW-0520">NAD</keyword>
<keyword id="KW-0874">Quinone</keyword>
<keyword id="KW-1185">Reference proteome</keyword>
<keyword id="KW-1278">Translocase</keyword>
<keyword id="KW-0813">Transport</keyword>
<keyword id="KW-0830">Ubiquinone</keyword>